<evidence type="ECO:0000255" key="1">
    <source>
        <dbReference type="HAMAP-Rule" id="MF_00059"/>
    </source>
</evidence>
<keyword id="KW-0240">DNA-directed RNA polymerase</keyword>
<keyword id="KW-0548">Nucleotidyltransferase</keyword>
<keyword id="KW-0804">Transcription</keyword>
<keyword id="KW-0808">Transferase</keyword>
<feature type="chain" id="PRO_0000264526" description="DNA-directed RNA polymerase subunit alpha">
    <location>
        <begin position="1"/>
        <end position="311"/>
    </location>
</feature>
<feature type="region of interest" description="Alpha N-terminal domain (alpha-NTD)" evidence="1">
    <location>
        <begin position="1"/>
        <end position="228"/>
    </location>
</feature>
<feature type="region of interest" description="Alpha C-terminal domain (alpha-CTD)" evidence="1">
    <location>
        <begin position="239"/>
        <end position="311"/>
    </location>
</feature>
<sequence>MQYQIERIDHQIADDRSQTGTFLIGPLERGQATTLGNSLRRVLMGGLEGSAVTAVRIAGINHEYATIPGVREDVLDILLNCKQLSINSSNPELEIGRLVASGPLDVKANDIQFSSQVEIVDGEKPIATIQEGHNLELEIHVERGVGYRPVDRKNQETTAIDLLQIDAVFMPVKRVNFSIDETAVAEGGTGRERLKMEVVTDGSTSPDDAIAEAANQLIELFQPLATVTMVEEIPEEPEPSPEAQIPLEELNLSVRAYNCLKRAQVNSVSDLMGFSYEDLLEIKNFGSKSADEVIEALERIGISIPQSRTSV</sequence>
<organism>
    <name type="scientific">Prochlorococcus marinus (strain MIT 9312)</name>
    <dbReference type="NCBI Taxonomy" id="74546"/>
    <lineage>
        <taxon>Bacteria</taxon>
        <taxon>Bacillati</taxon>
        <taxon>Cyanobacteriota</taxon>
        <taxon>Cyanophyceae</taxon>
        <taxon>Synechococcales</taxon>
        <taxon>Prochlorococcaceae</taxon>
        <taxon>Prochlorococcus</taxon>
    </lineage>
</organism>
<dbReference type="EC" id="2.7.7.6" evidence="1"/>
<dbReference type="EMBL" id="CP000111">
    <property type="protein sequence ID" value="ABB50688.1"/>
    <property type="molecule type" value="Genomic_DNA"/>
</dbReference>
<dbReference type="RefSeq" id="WP_011377170.1">
    <property type="nucleotide sequence ID" value="NC_007577.1"/>
</dbReference>
<dbReference type="SMR" id="Q318K7"/>
<dbReference type="STRING" id="74546.PMT9312_1628"/>
<dbReference type="KEGG" id="pmi:PMT9312_1628"/>
<dbReference type="eggNOG" id="COG0202">
    <property type="taxonomic scope" value="Bacteria"/>
</dbReference>
<dbReference type="HOGENOM" id="CLU_053084_0_1_3"/>
<dbReference type="OrthoDB" id="9805706at2"/>
<dbReference type="Proteomes" id="UP000002715">
    <property type="component" value="Chromosome"/>
</dbReference>
<dbReference type="GO" id="GO:0005737">
    <property type="term" value="C:cytoplasm"/>
    <property type="evidence" value="ECO:0007669"/>
    <property type="project" value="UniProtKB-ARBA"/>
</dbReference>
<dbReference type="GO" id="GO:0000428">
    <property type="term" value="C:DNA-directed RNA polymerase complex"/>
    <property type="evidence" value="ECO:0007669"/>
    <property type="project" value="UniProtKB-KW"/>
</dbReference>
<dbReference type="GO" id="GO:0003677">
    <property type="term" value="F:DNA binding"/>
    <property type="evidence" value="ECO:0007669"/>
    <property type="project" value="UniProtKB-UniRule"/>
</dbReference>
<dbReference type="GO" id="GO:0003899">
    <property type="term" value="F:DNA-directed RNA polymerase activity"/>
    <property type="evidence" value="ECO:0007669"/>
    <property type="project" value="UniProtKB-UniRule"/>
</dbReference>
<dbReference type="GO" id="GO:0046983">
    <property type="term" value="F:protein dimerization activity"/>
    <property type="evidence" value="ECO:0007669"/>
    <property type="project" value="InterPro"/>
</dbReference>
<dbReference type="GO" id="GO:0006351">
    <property type="term" value="P:DNA-templated transcription"/>
    <property type="evidence" value="ECO:0007669"/>
    <property type="project" value="UniProtKB-UniRule"/>
</dbReference>
<dbReference type="CDD" id="cd06928">
    <property type="entry name" value="RNAP_alpha_NTD"/>
    <property type="match status" value="1"/>
</dbReference>
<dbReference type="FunFam" id="2.170.120.12:FF:000001">
    <property type="entry name" value="DNA-directed RNA polymerase subunit alpha"/>
    <property type="match status" value="1"/>
</dbReference>
<dbReference type="Gene3D" id="1.10.150.20">
    <property type="entry name" value="5' to 3' exonuclease, C-terminal subdomain"/>
    <property type="match status" value="1"/>
</dbReference>
<dbReference type="Gene3D" id="2.170.120.12">
    <property type="entry name" value="DNA-directed RNA polymerase, insert domain"/>
    <property type="match status" value="1"/>
</dbReference>
<dbReference type="Gene3D" id="3.30.1360.10">
    <property type="entry name" value="RNA polymerase, RBP11-like subunit"/>
    <property type="match status" value="1"/>
</dbReference>
<dbReference type="HAMAP" id="MF_00059">
    <property type="entry name" value="RNApol_bact_RpoA"/>
    <property type="match status" value="1"/>
</dbReference>
<dbReference type="InterPro" id="IPR011262">
    <property type="entry name" value="DNA-dir_RNA_pol_insert"/>
</dbReference>
<dbReference type="InterPro" id="IPR011263">
    <property type="entry name" value="DNA-dir_RNA_pol_RpoA/D/Rpb3"/>
</dbReference>
<dbReference type="InterPro" id="IPR011773">
    <property type="entry name" value="DNA-dir_RpoA"/>
</dbReference>
<dbReference type="InterPro" id="IPR036603">
    <property type="entry name" value="RBP11-like"/>
</dbReference>
<dbReference type="InterPro" id="IPR011260">
    <property type="entry name" value="RNAP_asu_C"/>
</dbReference>
<dbReference type="InterPro" id="IPR036643">
    <property type="entry name" value="RNApol_insert_sf"/>
</dbReference>
<dbReference type="NCBIfam" id="NF003516">
    <property type="entry name" value="PRK05182.2-2"/>
    <property type="match status" value="1"/>
</dbReference>
<dbReference type="NCBIfam" id="NF003519">
    <property type="entry name" value="PRK05182.2-5"/>
    <property type="match status" value="1"/>
</dbReference>
<dbReference type="NCBIfam" id="TIGR02027">
    <property type="entry name" value="rpoA"/>
    <property type="match status" value="1"/>
</dbReference>
<dbReference type="Pfam" id="PF01000">
    <property type="entry name" value="RNA_pol_A_bac"/>
    <property type="match status" value="1"/>
</dbReference>
<dbReference type="Pfam" id="PF03118">
    <property type="entry name" value="RNA_pol_A_CTD"/>
    <property type="match status" value="1"/>
</dbReference>
<dbReference type="Pfam" id="PF01193">
    <property type="entry name" value="RNA_pol_L"/>
    <property type="match status" value="1"/>
</dbReference>
<dbReference type="SMART" id="SM00662">
    <property type="entry name" value="RPOLD"/>
    <property type="match status" value="1"/>
</dbReference>
<dbReference type="SUPFAM" id="SSF47789">
    <property type="entry name" value="C-terminal domain of RNA polymerase alpha subunit"/>
    <property type="match status" value="1"/>
</dbReference>
<dbReference type="SUPFAM" id="SSF56553">
    <property type="entry name" value="Insert subdomain of RNA polymerase alpha subunit"/>
    <property type="match status" value="1"/>
</dbReference>
<dbReference type="SUPFAM" id="SSF55257">
    <property type="entry name" value="RBP11-like subunits of RNA polymerase"/>
    <property type="match status" value="1"/>
</dbReference>
<proteinExistence type="inferred from homology"/>
<name>RPOA_PROM9</name>
<protein>
    <recommendedName>
        <fullName evidence="1">DNA-directed RNA polymerase subunit alpha</fullName>
        <shortName evidence="1">RNAP subunit alpha</shortName>
        <ecNumber evidence="1">2.7.7.6</ecNumber>
    </recommendedName>
    <alternativeName>
        <fullName evidence="1">RNA polymerase subunit alpha</fullName>
    </alternativeName>
    <alternativeName>
        <fullName evidence="1">Transcriptase subunit alpha</fullName>
    </alternativeName>
</protein>
<comment type="function">
    <text evidence="1">DNA-dependent RNA polymerase catalyzes the transcription of DNA into RNA using the four ribonucleoside triphosphates as substrates.</text>
</comment>
<comment type="catalytic activity">
    <reaction evidence="1">
        <text>RNA(n) + a ribonucleoside 5'-triphosphate = RNA(n+1) + diphosphate</text>
        <dbReference type="Rhea" id="RHEA:21248"/>
        <dbReference type="Rhea" id="RHEA-COMP:14527"/>
        <dbReference type="Rhea" id="RHEA-COMP:17342"/>
        <dbReference type="ChEBI" id="CHEBI:33019"/>
        <dbReference type="ChEBI" id="CHEBI:61557"/>
        <dbReference type="ChEBI" id="CHEBI:140395"/>
        <dbReference type="EC" id="2.7.7.6"/>
    </reaction>
</comment>
<comment type="subunit">
    <text evidence="1">In cyanobacteria the RNAP catalytic core is composed of 2 alpha, 1 beta, 1 beta', 1 gamma and 1 omega subunit. When a sigma factor is associated with the core the holoenzyme is formed, which can initiate transcription.</text>
</comment>
<comment type="domain">
    <text evidence="1">The N-terminal domain is essential for RNAP assembly and basal transcription, whereas the C-terminal domain is involved in interaction with transcriptional regulators and with upstream promoter elements.</text>
</comment>
<comment type="similarity">
    <text evidence="1">Belongs to the RNA polymerase alpha chain family.</text>
</comment>
<gene>
    <name evidence="1" type="primary">rpoA</name>
    <name type="ordered locus">PMT9312_1628</name>
</gene>
<accession>Q318K7</accession>
<reference key="1">
    <citation type="journal article" date="2006" name="Science">
        <title>Genomic islands and the ecology and evolution of Prochlorococcus.</title>
        <authorList>
            <person name="Coleman M.L."/>
            <person name="Sullivan M.B."/>
            <person name="Martiny A.C."/>
            <person name="Steglich C."/>
            <person name="Barry K."/>
            <person name="Delong E.F."/>
            <person name="Chisholm S.W."/>
        </authorList>
    </citation>
    <scope>NUCLEOTIDE SEQUENCE [LARGE SCALE GENOMIC DNA]</scope>
    <source>
        <strain>MIT 9312</strain>
    </source>
</reference>